<protein>
    <recommendedName>
        <fullName>Putative 1-aminocyclopropane-1-carboxylate deaminase</fullName>
        <shortName>ACC deaminase</shortName>
        <ecNumber>3.5.99.7</ecNumber>
    </recommendedName>
</protein>
<dbReference type="EC" id="3.5.99.7"/>
<dbReference type="EMBL" id="AE009950">
    <property type="protein sequence ID" value="AAL80134.1"/>
    <property type="status" value="ALT_INIT"/>
    <property type="molecule type" value="Genomic_DNA"/>
</dbReference>
<dbReference type="RefSeq" id="WP_011011122.1">
    <property type="nucleotide sequence ID" value="NZ_CP023154.1"/>
</dbReference>
<dbReference type="SMR" id="Q8U4R3"/>
<dbReference type="STRING" id="186497.PF0010"/>
<dbReference type="PaxDb" id="186497-PF0010"/>
<dbReference type="KEGG" id="pfu:PF0010"/>
<dbReference type="PATRIC" id="fig|186497.12.peg.11"/>
<dbReference type="eggNOG" id="arCOG01435">
    <property type="taxonomic scope" value="Archaea"/>
</dbReference>
<dbReference type="HOGENOM" id="CLU_048897_1_0_2"/>
<dbReference type="OrthoDB" id="371827at2157"/>
<dbReference type="PhylomeDB" id="Q8U4R3"/>
<dbReference type="Proteomes" id="UP000001013">
    <property type="component" value="Chromosome"/>
</dbReference>
<dbReference type="GO" id="GO:0008660">
    <property type="term" value="F:1-aminocyclopropane-1-carboxylate deaminase activity"/>
    <property type="evidence" value="ECO:0007669"/>
    <property type="project" value="UniProtKB-EC"/>
</dbReference>
<dbReference type="GO" id="GO:0019148">
    <property type="term" value="F:D-cysteine desulfhydrase activity"/>
    <property type="evidence" value="ECO:0007669"/>
    <property type="project" value="TreeGrafter"/>
</dbReference>
<dbReference type="Gene3D" id="3.40.50.1100">
    <property type="match status" value="2"/>
</dbReference>
<dbReference type="InterPro" id="IPR027278">
    <property type="entry name" value="ACCD_DCysDesulf"/>
</dbReference>
<dbReference type="InterPro" id="IPR005966">
    <property type="entry name" value="D-Cys_desShydrase"/>
</dbReference>
<dbReference type="InterPro" id="IPR001926">
    <property type="entry name" value="TrpB-like_PALP"/>
</dbReference>
<dbReference type="InterPro" id="IPR036052">
    <property type="entry name" value="TrpB-like_PALP_sf"/>
</dbReference>
<dbReference type="NCBIfam" id="TIGR01275">
    <property type="entry name" value="ACC_deam_rel"/>
    <property type="match status" value="1"/>
</dbReference>
<dbReference type="NCBIfam" id="NF010646">
    <property type="entry name" value="PRK14045.1"/>
    <property type="match status" value="1"/>
</dbReference>
<dbReference type="PANTHER" id="PTHR43780">
    <property type="entry name" value="1-AMINOCYCLOPROPANE-1-CARBOXYLATE DEAMINASE-RELATED"/>
    <property type="match status" value="1"/>
</dbReference>
<dbReference type="PANTHER" id="PTHR43780:SF2">
    <property type="entry name" value="1-AMINOCYCLOPROPANE-1-CARBOXYLATE DEAMINASE-RELATED"/>
    <property type="match status" value="1"/>
</dbReference>
<dbReference type="Pfam" id="PF00291">
    <property type="entry name" value="PALP"/>
    <property type="match status" value="1"/>
</dbReference>
<dbReference type="PIRSF" id="PIRSF006278">
    <property type="entry name" value="ACCD_DCysDesulf"/>
    <property type="match status" value="1"/>
</dbReference>
<dbReference type="SUPFAM" id="SSF53686">
    <property type="entry name" value="Tryptophan synthase beta subunit-like PLP-dependent enzymes"/>
    <property type="match status" value="1"/>
</dbReference>
<keyword id="KW-0378">Hydrolase</keyword>
<keyword id="KW-0663">Pyridoxal phosphate</keyword>
<keyword id="KW-1185">Reference proteome</keyword>
<organism>
    <name type="scientific">Pyrococcus furiosus (strain ATCC 43587 / DSM 3638 / JCM 8422 / Vc1)</name>
    <dbReference type="NCBI Taxonomy" id="186497"/>
    <lineage>
        <taxon>Archaea</taxon>
        <taxon>Methanobacteriati</taxon>
        <taxon>Methanobacteriota</taxon>
        <taxon>Thermococci</taxon>
        <taxon>Thermococcales</taxon>
        <taxon>Thermococcaceae</taxon>
        <taxon>Pyrococcus</taxon>
    </lineage>
</organism>
<evidence type="ECO:0000250" key="1"/>
<evidence type="ECO:0000305" key="2"/>
<feature type="chain" id="PRO_0000184522" description="Putative 1-aminocyclopropane-1-carboxylate deaminase">
    <location>
        <begin position="1"/>
        <end position="329"/>
    </location>
</feature>
<feature type="modified residue" description="N6-(pyridoxal phosphate)lysine" evidence="1">
    <location>
        <position position="54"/>
    </location>
</feature>
<accession>Q8U4R3</accession>
<name>1A1D_PYRFU</name>
<proteinExistence type="inferred from homology"/>
<sequence length="329" mass="35795">MHPKVQSLLSKFPRVELIPWETPIQYLPNISKLVGADIYVKRDDLTGLGIGGNKIRKLEYLLGDAIIRKADVIITVGAVHSNHAFVTGLAAKKLGFDVVLVLRGKEELRGNYLLDKIMGIETRVYEAKDSFELMKYAEEVAKELEEKGRKPYIIPVGGASPVGTLGYVRASGEIAEQGNRIGVNFDSIVVATGSGGTLAGLSVGLAILRKETRAIGMAVGKFGETMVNKVEELAKATGEFIGVKNLKLKIELYDYSFGEYGKITREVAETIRLVGTKEGVILDPVYTGKAFYGLLDLAKKGELGEKILFIHTGGISGTFHYGDKILSFL</sequence>
<reference key="1">
    <citation type="journal article" date="1999" name="Genetics">
        <title>Divergence of the hyperthermophilic archaea Pyrococcus furiosus and P. horikoshii inferred from complete genomic sequences.</title>
        <authorList>
            <person name="Maeder D.L."/>
            <person name="Weiss R.B."/>
            <person name="Dunn D.M."/>
            <person name="Cherry J.L."/>
            <person name="Gonzalez J.M."/>
            <person name="DiRuggiero J."/>
            <person name="Robb F.T."/>
        </authorList>
    </citation>
    <scope>NUCLEOTIDE SEQUENCE [LARGE SCALE GENOMIC DNA]</scope>
    <source>
        <strain>ATCC 43587 / DSM 3638 / JCM 8422 / Vc1</strain>
    </source>
</reference>
<gene>
    <name type="ordered locus">PF0010</name>
</gene>
<comment type="catalytic activity">
    <reaction>
        <text>1-aminocyclopropane-1-carboxylate + H2O = 2-oxobutanoate + NH4(+)</text>
        <dbReference type="Rhea" id="RHEA:16933"/>
        <dbReference type="ChEBI" id="CHEBI:15377"/>
        <dbReference type="ChEBI" id="CHEBI:16763"/>
        <dbReference type="ChEBI" id="CHEBI:28938"/>
        <dbReference type="ChEBI" id="CHEBI:58360"/>
        <dbReference type="EC" id="3.5.99.7"/>
    </reaction>
</comment>
<comment type="cofactor">
    <cofactor evidence="1">
        <name>pyridoxal 5'-phosphate</name>
        <dbReference type="ChEBI" id="CHEBI:597326"/>
    </cofactor>
</comment>
<comment type="similarity">
    <text evidence="2">Belongs to the ACC deaminase/D-cysteine desulfhydrase family.</text>
</comment>
<comment type="sequence caution" evidence="2">
    <conflict type="erroneous initiation">
        <sequence resource="EMBL-CDS" id="AAL80134"/>
    </conflict>
</comment>